<organism>
    <name type="scientific">Yersinia pseudotuberculosis serotype O:3 (strain YPIII)</name>
    <dbReference type="NCBI Taxonomy" id="502800"/>
    <lineage>
        <taxon>Bacteria</taxon>
        <taxon>Pseudomonadati</taxon>
        <taxon>Pseudomonadota</taxon>
        <taxon>Gammaproteobacteria</taxon>
        <taxon>Enterobacterales</taxon>
        <taxon>Yersiniaceae</taxon>
        <taxon>Yersinia</taxon>
    </lineage>
</organism>
<comment type="function">
    <text evidence="1">One of the primary rRNA binding proteins, it binds directly to 16S rRNA where it nucleates assembly of the body of the 30S subunit.</text>
</comment>
<comment type="function">
    <text evidence="1">With S5 and S12 plays an important role in translational accuracy.</text>
</comment>
<comment type="subunit">
    <text evidence="1">Part of the 30S ribosomal subunit. Contacts protein S5. The interaction surface between S4 and S5 is involved in control of translational fidelity.</text>
</comment>
<comment type="similarity">
    <text evidence="1">Belongs to the universal ribosomal protein uS4 family.</text>
</comment>
<feature type="chain" id="PRO_1000140824" description="Small ribosomal subunit protein uS4">
    <location>
        <begin position="1"/>
        <end position="206"/>
    </location>
</feature>
<feature type="domain" description="S4 RNA-binding" evidence="1">
    <location>
        <begin position="96"/>
        <end position="156"/>
    </location>
</feature>
<gene>
    <name evidence="1" type="primary">rpsD</name>
    <name type="ordered locus">YPK_0307</name>
</gene>
<dbReference type="EMBL" id="CP000950">
    <property type="protein sequence ID" value="ACA66620.1"/>
    <property type="molecule type" value="Genomic_DNA"/>
</dbReference>
<dbReference type="RefSeq" id="WP_002218949.1">
    <property type="nucleotide sequence ID" value="NZ_CP009792.1"/>
</dbReference>
<dbReference type="SMR" id="B1JJG9"/>
<dbReference type="GeneID" id="97454255"/>
<dbReference type="KEGG" id="ypy:YPK_0307"/>
<dbReference type="PATRIC" id="fig|502800.11.peg.914"/>
<dbReference type="GO" id="GO:0015935">
    <property type="term" value="C:small ribosomal subunit"/>
    <property type="evidence" value="ECO:0007669"/>
    <property type="project" value="InterPro"/>
</dbReference>
<dbReference type="GO" id="GO:0019843">
    <property type="term" value="F:rRNA binding"/>
    <property type="evidence" value="ECO:0007669"/>
    <property type="project" value="UniProtKB-UniRule"/>
</dbReference>
<dbReference type="GO" id="GO:0003735">
    <property type="term" value="F:structural constituent of ribosome"/>
    <property type="evidence" value="ECO:0007669"/>
    <property type="project" value="InterPro"/>
</dbReference>
<dbReference type="GO" id="GO:0042274">
    <property type="term" value="P:ribosomal small subunit biogenesis"/>
    <property type="evidence" value="ECO:0007669"/>
    <property type="project" value="TreeGrafter"/>
</dbReference>
<dbReference type="GO" id="GO:0006412">
    <property type="term" value="P:translation"/>
    <property type="evidence" value="ECO:0007669"/>
    <property type="project" value="UniProtKB-UniRule"/>
</dbReference>
<dbReference type="CDD" id="cd00165">
    <property type="entry name" value="S4"/>
    <property type="match status" value="1"/>
</dbReference>
<dbReference type="FunFam" id="1.10.1050.10:FF:000001">
    <property type="entry name" value="30S ribosomal protein S4"/>
    <property type="match status" value="1"/>
</dbReference>
<dbReference type="FunFam" id="3.10.290.10:FF:000001">
    <property type="entry name" value="30S ribosomal protein S4"/>
    <property type="match status" value="1"/>
</dbReference>
<dbReference type="Gene3D" id="1.10.1050.10">
    <property type="entry name" value="Ribosomal Protein S4 Delta 41, Chain A, domain 1"/>
    <property type="match status" value="1"/>
</dbReference>
<dbReference type="Gene3D" id="3.10.290.10">
    <property type="entry name" value="RNA-binding S4 domain"/>
    <property type="match status" value="1"/>
</dbReference>
<dbReference type="HAMAP" id="MF_01306_B">
    <property type="entry name" value="Ribosomal_uS4_B"/>
    <property type="match status" value="1"/>
</dbReference>
<dbReference type="InterPro" id="IPR022801">
    <property type="entry name" value="Ribosomal_uS4"/>
</dbReference>
<dbReference type="InterPro" id="IPR005709">
    <property type="entry name" value="Ribosomal_uS4_bac-type"/>
</dbReference>
<dbReference type="InterPro" id="IPR018079">
    <property type="entry name" value="Ribosomal_uS4_CS"/>
</dbReference>
<dbReference type="InterPro" id="IPR001912">
    <property type="entry name" value="Ribosomal_uS4_N"/>
</dbReference>
<dbReference type="InterPro" id="IPR002942">
    <property type="entry name" value="S4_RNA-bd"/>
</dbReference>
<dbReference type="InterPro" id="IPR036986">
    <property type="entry name" value="S4_RNA-bd_sf"/>
</dbReference>
<dbReference type="NCBIfam" id="NF003717">
    <property type="entry name" value="PRK05327.1"/>
    <property type="match status" value="1"/>
</dbReference>
<dbReference type="NCBIfam" id="TIGR01017">
    <property type="entry name" value="rpsD_bact"/>
    <property type="match status" value="1"/>
</dbReference>
<dbReference type="PANTHER" id="PTHR11831">
    <property type="entry name" value="30S 40S RIBOSOMAL PROTEIN"/>
    <property type="match status" value="1"/>
</dbReference>
<dbReference type="PANTHER" id="PTHR11831:SF4">
    <property type="entry name" value="SMALL RIBOSOMAL SUBUNIT PROTEIN US4M"/>
    <property type="match status" value="1"/>
</dbReference>
<dbReference type="Pfam" id="PF00163">
    <property type="entry name" value="Ribosomal_S4"/>
    <property type="match status" value="1"/>
</dbReference>
<dbReference type="Pfam" id="PF01479">
    <property type="entry name" value="S4"/>
    <property type="match status" value="1"/>
</dbReference>
<dbReference type="SMART" id="SM01390">
    <property type="entry name" value="Ribosomal_S4"/>
    <property type="match status" value="1"/>
</dbReference>
<dbReference type="SMART" id="SM00363">
    <property type="entry name" value="S4"/>
    <property type="match status" value="1"/>
</dbReference>
<dbReference type="SUPFAM" id="SSF55174">
    <property type="entry name" value="Alpha-L RNA-binding motif"/>
    <property type="match status" value="1"/>
</dbReference>
<dbReference type="PROSITE" id="PS00632">
    <property type="entry name" value="RIBOSOMAL_S4"/>
    <property type="match status" value="1"/>
</dbReference>
<dbReference type="PROSITE" id="PS50889">
    <property type="entry name" value="S4"/>
    <property type="match status" value="1"/>
</dbReference>
<sequence length="206" mass="23549">MARYLGPKLKLSRREGTDLFLKSGVRAIDTKCKIEQPPGQHGARKPRLSDYGVQLREKQKVRRIYGVLERQFRNYYKEAARLKGNTGANLLQLLEGRLDNVVYRMGFGATRAESRQLVSHKAIMVNGRVVNIASYQVSPNDVVSIREKAKKQSRVKAALELAEQREKPTWLEVDAVKMEGVFKRIPERTDLSADINEHLIVELYSK</sequence>
<name>RS4_YERPY</name>
<protein>
    <recommendedName>
        <fullName evidence="1">Small ribosomal subunit protein uS4</fullName>
    </recommendedName>
    <alternativeName>
        <fullName evidence="2">30S ribosomal protein S4</fullName>
    </alternativeName>
</protein>
<reference key="1">
    <citation type="submission" date="2008-02" db="EMBL/GenBank/DDBJ databases">
        <title>Complete sequence of Yersinia pseudotuberculosis YPIII.</title>
        <authorList>
            <consortium name="US DOE Joint Genome Institute"/>
            <person name="Copeland A."/>
            <person name="Lucas S."/>
            <person name="Lapidus A."/>
            <person name="Glavina del Rio T."/>
            <person name="Dalin E."/>
            <person name="Tice H."/>
            <person name="Bruce D."/>
            <person name="Goodwin L."/>
            <person name="Pitluck S."/>
            <person name="Munk A.C."/>
            <person name="Brettin T."/>
            <person name="Detter J.C."/>
            <person name="Han C."/>
            <person name="Tapia R."/>
            <person name="Schmutz J."/>
            <person name="Larimer F."/>
            <person name="Land M."/>
            <person name="Hauser L."/>
            <person name="Challacombe J.F."/>
            <person name="Green L."/>
            <person name="Lindler L.E."/>
            <person name="Nikolich M.P."/>
            <person name="Richardson P."/>
        </authorList>
    </citation>
    <scope>NUCLEOTIDE SEQUENCE [LARGE SCALE GENOMIC DNA]</scope>
    <source>
        <strain>YPIII</strain>
    </source>
</reference>
<keyword id="KW-0687">Ribonucleoprotein</keyword>
<keyword id="KW-0689">Ribosomal protein</keyword>
<keyword id="KW-0694">RNA-binding</keyword>
<keyword id="KW-0699">rRNA-binding</keyword>
<accession>B1JJG9</accession>
<proteinExistence type="inferred from homology"/>
<evidence type="ECO:0000255" key="1">
    <source>
        <dbReference type="HAMAP-Rule" id="MF_01306"/>
    </source>
</evidence>
<evidence type="ECO:0000305" key="2"/>